<protein>
    <recommendedName>
        <fullName>Agamous-like MADS-box protein AGL13</fullName>
    </recommendedName>
</protein>
<keyword id="KW-0238">DNA-binding</keyword>
<keyword id="KW-0539">Nucleus</keyword>
<keyword id="KW-1185">Reference proteome</keyword>
<keyword id="KW-0804">Transcription</keyword>
<keyword id="KW-0805">Transcription regulation</keyword>
<evidence type="ECO:0000255" key="1">
    <source>
        <dbReference type="PROSITE-ProRule" id="PRU00251"/>
    </source>
</evidence>
<evidence type="ECO:0000255" key="2">
    <source>
        <dbReference type="PROSITE-ProRule" id="PRU00629"/>
    </source>
</evidence>
<evidence type="ECO:0000305" key="3"/>
<comment type="function">
    <text>Probable transcription factor.</text>
</comment>
<comment type="subcellular location">
    <subcellularLocation>
        <location evidence="1">Nucleus</location>
    </subcellularLocation>
</comment>
<feature type="chain" id="PRO_0000199472" description="Agamous-like MADS-box protein AGL13">
    <location>
        <begin position="1"/>
        <end position="244"/>
    </location>
</feature>
<feature type="domain" description="MADS-box" evidence="1">
    <location>
        <begin position="3"/>
        <end position="57"/>
    </location>
</feature>
<feature type="domain" description="K-box" evidence="2">
    <location>
        <begin position="85"/>
        <end position="175"/>
    </location>
</feature>
<feature type="sequence conflict" description="In Ref. 1; AAC49081." evidence="3" ref="1">
    <original>LQIGFQQHYEQGEGSSVTKSNARSDAETNFVQ</original>
    <variation>YRLGFNNTMSKVKDLR</variation>
    <location>
        <begin position="213"/>
        <end position="244"/>
    </location>
</feature>
<reference key="1">
    <citation type="journal article" date="1995" name="Plant Cell">
        <title>Diverse roles for MADS box genes in Arabidopsis development.</title>
        <authorList>
            <person name="Rounsley S.D."/>
            <person name="Ditta G.S."/>
            <person name="Yanofsky M.F."/>
        </authorList>
    </citation>
    <scope>NUCLEOTIDE SEQUENCE [MRNA]</scope>
    <source>
        <strain>cv. Landsberg erecta</strain>
        <tissue>Flower</tissue>
    </source>
</reference>
<reference key="2">
    <citation type="journal article" date="2000" name="Nature">
        <title>Sequence and analysis of chromosome 3 of the plant Arabidopsis thaliana.</title>
        <authorList>
            <person name="Salanoubat M."/>
            <person name="Lemcke K."/>
            <person name="Rieger M."/>
            <person name="Ansorge W."/>
            <person name="Unseld M."/>
            <person name="Fartmann B."/>
            <person name="Valle G."/>
            <person name="Bloecker H."/>
            <person name="Perez-Alonso M."/>
            <person name="Obermaier B."/>
            <person name="Delseny M."/>
            <person name="Boutry M."/>
            <person name="Grivell L.A."/>
            <person name="Mache R."/>
            <person name="Puigdomenech P."/>
            <person name="De Simone V."/>
            <person name="Choisne N."/>
            <person name="Artiguenave F."/>
            <person name="Robert C."/>
            <person name="Brottier P."/>
            <person name="Wincker P."/>
            <person name="Cattolico L."/>
            <person name="Weissenbach J."/>
            <person name="Saurin W."/>
            <person name="Quetier F."/>
            <person name="Schaefer M."/>
            <person name="Mueller-Auer S."/>
            <person name="Gabel C."/>
            <person name="Fuchs M."/>
            <person name="Benes V."/>
            <person name="Wurmbach E."/>
            <person name="Drzonek H."/>
            <person name="Erfle H."/>
            <person name="Jordan N."/>
            <person name="Bangert S."/>
            <person name="Wiedelmann R."/>
            <person name="Kranz H."/>
            <person name="Voss H."/>
            <person name="Holland R."/>
            <person name="Brandt P."/>
            <person name="Nyakatura G."/>
            <person name="Vezzi A."/>
            <person name="D'Angelo M."/>
            <person name="Pallavicini A."/>
            <person name="Toppo S."/>
            <person name="Simionati B."/>
            <person name="Conrad A."/>
            <person name="Hornischer K."/>
            <person name="Kauer G."/>
            <person name="Loehnert T.-H."/>
            <person name="Nordsiek G."/>
            <person name="Reichelt J."/>
            <person name="Scharfe M."/>
            <person name="Schoen O."/>
            <person name="Bargues M."/>
            <person name="Terol J."/>
            <person name="Climent J."/>
            <person name="Navarro P."/>
            <person name="Collado C."/>
            <person name="Perez-Perez A."/>
            <person name="Ottenwaelder B."/>
            <person name="Duchemin D."/>
            <person name="Cooke R."/>
            <person name="Laudie M."/>
            <person name="Berger-Llauro C."/>
            <person name="Purnelle B."/>
            <person name="Masuy D."/>
            <person name="de Haan M."/>
            <person name="Maarse A.C."/>
            <person name="Alcaraz J.-P."/>
            <person name="Cottet A."/>
            <person name="Casacuberta E."/>
            <person name="Monfort A."/>
            <person name="Argiriou A."/>
            <person name="Flores M."/>
            <person name="Liguori R."/>
            <person name="Vitale D."/>
            <person name="Mannhaupt G."/>
            <person name="Haase D."/>
            <person name="Schoof H."/>
            <person name="Rudd S."/>
            <person name="Zaccaria P."/>
            <person name="Mewes H.-W."/>
            <person name="Mayer K.F.X."/>
            <person name="Kaul S."/>
            <person name="Town C.D."/>
            <person name="Koo H.L."/>
            <person name="Tallon L.J."/>
            <person name="Jenkins J."/>
            <person name="Rooney T."/>
            <person name="Rizzo M."/>
            <person name="Walts A."/>
            <person name="Utterback T."/>
            <person name="Fujii C.Y."/>
            <person name="Shea T.P."/>
            <person name="Creasy T.H."/>
            <person name="Haas B."/>
            <person name="Maiti R."/>
            <person name="Wu D."/>
            <person name="Peterson J."/>
            <person name="Van Aken S."/>
            <person name="Pai G."/>
            <person name="Militscher J."/>
            <person name="Sellers P."/>
            <person name="Gill J.E."/>
            <person name="Feldblyum T.V."/>
            <person name="Preuss D."/>
            <person name="Lin X."/>
            <person name="Nierman W.C."/>
            <person name="Salzberg S.L."/>
            <person name="White O."/>
            <person name="Venter J.C."/>
            <person name="Fraser C.M."/>
            <person name="Kaneko T."/>
            <person name="Nakamura Y."/>
            <person name="Sato S."/>
            <person name="Kato T."/>
            <person name="Asamizu E."/>
            <person name="Sasamoto S."/>
            <person name="Kimura T."/>
            <person name="Idesawa K."/>
            <person name="Kawashima K."/>
            <person name="Kishida Y."/>
            <person name="Kiyokawa C."/>
            <person name="Kohara M."/>
            <person name="Matsumoto M."/>
            <person name="Matsuno A."/>
            <person name="Muraki A."/>
            <person name="Nakayama S."/>
            <person name="Nakazaki N."/>
            <person name="Shinpo S."/>
            <person name="Takeuchi C."/>
            <person name="Wada T."/>
            <person name="Watanabe A."/>
            <person name="Yamada M."/>
            <person name="Yasuda M."/>
            <person name="Tabata S."/>
        </authorList>
    </citation>
    <scope>NUCLEOTIDE SEQUENCE [LARGE SCALE GENOMIC DNA]</scope>
    <source>
        <strain>cv. Columbia</strain>
    </source>
</reference>
<reference key="3">
    <citation type="journal article" date="2017" name="Plant J.">
        <title>Araport11: a complete reannotation of the Arabidopsis thaliana reference genome.</title>
        <authorList>
            <person name="Cheng C.Y."/>
            <person name="Krishnakumar V."/>
            <person name="Chan A.P."/>
            <person name="Thibaud-Nissen F."/>
            <person name="Schobel S."/>
            <person name="Town C.D."/>
        </authorList>
    </citation>
    <scope>GENOME REANNOTATION</scope>
    <source>
        <strain>cv. Columbia</strain>
    </source>
</reference>
<name>AGL13_ARATH</name>
<sequence>MGRGKVEVKRIENKITRQVTFSKRKSGLLKKAYELSVLCDAEVSLIIFSTGGKLYEFSNVGVGRTIERYYRCKDNLLDNDTLEDTQGLRQEVTKLKCKYESLLRTHRNLVGEDLEGMSIKELQTLERQLEGALSATRKQKTQVMMEQMEELRRKERELGDINNKLKLETEDHDFKGFQDLLLNPVLTAGCSTDFSLQSTHQNYISDCNLGYFLQIGFQQHYEQGEGSSVTKSNARSDAETNFVQ</sequence>
<organism>
    <name type="scientific">Arabidopsis thaliana</name>
    <name type="common">Mouse-ear cress</name>
    <dbReference type="NCBI Taxonomy" id="3702"/>
    <lineage>
        <taxon>Eukaryota</taxon>
        <taxon>Viridiplantae</taxon>
        <taxon>Streptophyta</taxon>
        <taxon>Embryophyta</taxon>
        <taxon>Tracheophyta</taxon>
        <taxon>Spermatophyta</taxon>
        <taxon>Magnoliopsida</taxon>
        <taxon>eudicotyledons</taxon>
        <taxon>Gunneridae</taxon>
        <taxon>Pentapetalae</taxon>
        <taxon>rosids</taxon>
        <taxon>malvids</taxon>
        <taxon>Brassicales</taxon>
        <taxon>Brassicaceae</taxon>
        <taxon>Camelineae</taxon>
        <taxon>Arabidopsis</taxon>
    </lineage>
</organism>
<dbReference type="EMBL" id="U20183">
    <property type="protein sequence ID" value="AAC49081.1"/>
    <property type="molecule type" value="mRNA"/>
</dbReference>
<dbReference type="EMBL" id="AL137898">
    <property type="protein sequence ID" value="CAB71042.1"/>
    <property type="molecule type" value="Genomic_DNA"/>
</dbReference>
<dbReference type="EMBL" id="CP002686">
    <property type="protein sequence ID" value="AEE80158.1"/>
    <property type="molecule type" value="Genomic_DNA"/>
</dbReference>
<dbReference type="PIR" id="T47904">
    <property type="entry name" value="T47904"/>
</dbReference>
<dbReference type="RefSeq" id="NP_191671.1">
    <property type="nucleotide sequence ID" value="NM_115976.2"/>
</dbReference>
<dbReference type="SMR" id="Q38837"/>
<dbReference type="BioGRID" id="10598">
    <property type="interactions" value="6"/>
</dbReference>
<dbReference type="FunCoup" id="Q38837">
    <property type="interactions" value="25"/>
</dbReference>
<dbReference type="IntAct" id="Q38837">
    <property type="interactions" value="7"/>
</dbReference>
<dbReference type="STRING" id="3702.Q38837"/>
<dbReference type="PaxDb" id="3702-AT3G61120.1"/>
<dbReference type="ProteomicsDB" id="244831"/>
<dbReference type="EnsemblPlants" id="AT3G61120.1">
    <property type="protein sequence ID" value="AT3G61120.1"/>
    <property type="gene ID" value="AT3G61120"/>
</dbReference>
<dbReference type="GeneID" id="825284"/>
<dbReference type="Gramene" id="AT3G61120.1">
    <property type="protein sequence ID" value="AT3G61120.1"/>
    <property type="gene ID" value="AT3G61120"/>
</dbReference>
<dbReference type="KEGG" id="ath:AT3G61120"/>
<dbReference type="Araport" id="AT3G61120"/>
<dbReference type="TAIR" id="AT3G61120">
    <property type="gene designation" value="AGL13"/>
</dbReference>
<dbReference type="eggNOG" id="KOG0014">
    <property type="taxonomic scope" value="Eukaryota"/>
</dbReference>
<dbReference type="HOGENOM" id="CLU_053053_0_2_1"/>
<dbReference type="InParanoid" id="Q38837"/>
<dbReference type="OMA" id="ERYYRCK"/>
<dbReference type="OrthoDB" id="1898716at2759"/>
<dbReference type="PhylomeDB" id="Q38837"/>
<dbReference type="PRO" id="PR:Q38837"/>
<dbReference type="Proteomes" id="UP000006548">
    <property type="component" value="Chromosome 3"/>
</dbReference>
<dbReference type="ExpressionAtlas" id="Q38837">
    <property type="expression patterns" value="baseline and differential"/>
</dbReference>
<dbReference type="GO" id="GO:0005634">
    <property type="term" value="C:nucleus"/>
    <property type="evidence" value="ECO:0007669"/>
    <property type="project" value="UniProtKB-SubCell"/>
</dbReference>
<dbReference type="GO" id="GO:0003700">
    <property type="term" value="F:DNA-binding transcription factor activity"/>
    <property type="evidence" value="ECO:0000250"/>
    <property type="project" value="TAIR"/>
</dbReference>
<dbReference type="GO" id="GO:0046983">
    <property type="term" value="F:protein dimerization activity"/>
    <property type="evidence" value="ECO:0007669"/>
    <property type="project" value="InterPro"/>
</dbReference>
<dbReference type="GO" id="GO:0000977">
    <property type="term" value="F:RNA polymerase II transcription regulatory region sequence-specific DNA binding"/>
    <property type="evidence" value="ECO:0007669"/>
    <property type="project" value="InterPro"/>
</dbReference>
<dbReference type="GO" id="GO:0048481">
    <property type="term" value="P:plant ovule development"/>
    <property type="evidence" value="ECO:0000315"/>
    <property type="project" value="TAIR"/>
</dbReference>
<dbReference type="GO" id="GO:0009555">
    <property type="term" value="P:pollen development"/>
    <property type="evidence" value="ECO:0000315"/>
    <property type="project" value="TAIR"/>
</dbReference>
<dbReference type="GO" id="GO:0045944">
    <property type="term" value="P:positive regulation of transcription by RNA polymerase II"/>
    <property type="evidence" value="ECO:0007669"/>
    <property type="project" value="InterPro"/>
</dbReference>
<dbReference type="GO" id="GO:0010468">
    <property type="term" value="P:regulation of gene expression"/>
    <property type="evidence" value="ECO:0000315"/>
    <property type="project" value="TAIR"/>
</dbReference>
<dbReference type="CDD" id="cd00265">
    <property type="entry name" value="MADS_MEF2_like"/>
    <property type="match status" value="1"/>
</dbReference>
<dbReference type="FunFam" id="3.40.1810.10:FF:000030">
    <property type="entry name" value="Agamous-like MADS-box protein AGL13"/>
    <property type="match status" value="1"/>
</dbReference>
<dbReference type="Gene3D" id="3.40.1810.10">
    <property type="entry name" value="Transcription factor, MADS-box"/>
    <property type="match status" value="1"/>
</dbReference>
<dbReference type="InterPro" id="IPR050142">
    <property type="entry name" value="MADS-box/MEF2_TF"/>
</dbReference>
<dbReference type="InterPro" id="IPR033896">
    <property type="entry name" value="MEF2-like_N"/>
</dbReference>
<dbReference type="InterPro" id="IPR002487">
    <property type="entry name" value="TF_Kbox"/>
</dbReference>
<dbReference type="InterPro" id="IPR002100">
    <property type="entry name" value="TF_MADSbox"/>
</dbReference>
<dbReference type="InterPro" id="IPR036879">
    <property type="entry name" value="TF_MADSbox_sf"/>
</dbReference>
<dbReference type="PANTHER" id="PTHR48019">
    <property type="entry name" value="SERUM RESPONSE FACTOR HOMOLOG"/>
    <property type="match status" value="1"/>
</dbReference>
<dbReference type="Pfam" id="PF01486">
    <property type="entry name" value="K-box"/>
    <property type="match status" value="1"/>
</dbReference>
<dbReference type="Pfam" id="PF00319">
    <property type="entry name" value="SRF-TF"/>
    <property type="match status" value="1"/>
</dbReference>
<dbReference type="PRINTS" id="PR00404">
    <property type="entry name" value="MADSDOMAIN"/>
</dbReference>
<dbReference type="SMART" id="SM00432">
    <property type="entry name" value="MADS"/>
    <property type="match status" value="1"/>
</dbReference>
<dbReference type="SUPFAM" id="SSF55455">
    <property type="entry name" value="SRF-like"/>
    <property type="match status" value="1"/>
</dbReference>
<dbReference type="PROSITE" id="PS51297">
    <property type="entry name" value="K_BOX"/>
    <property type="match status" value="1"/>
</dbReference>
<dbReference type="PROSITE" id="PS00350">
    <property type="entry name" value="MADS_BOX_1"/>
    <property type="match status" value="1"/>
</dbReference>
<dbReference type="PROSITE" id="PS50066">
    <property type="entry name" value="MADS_BOX_2"/>
    <property type="match status" value="1"/>
</dbReference>
<proteinExistence type="evidence at transcript level"/>
<gene>
    <name type="primary">AGL13</name>
    <name type="ordered locus">At3g61120</name>
    <name type="ORF">T20K12.20</name>
</gene>
<accession>Q38837</accession>
<accession>Q9M2F0</accession>